<sequence>MEQMDAHQIISFIQNSKKATPVKVYLKGDLEKIDFPSDVKTFITGNAGTIFGEWAVVEPLLEANKANIEDYVIENDRRNSAIPLLDMKNINARIEPGAVIRDQVTIGDNAVIMMGASINIGSVIGDGTMIDMNVVLGGRATVGKNCHIGAGSVLAGVVEPPSAQPVIVEDNVVVGANVVVLEGVRIGEGAVVAAGAIVTKDVAPGTVVAGIPARELKKLDAKTASKTEIMQELRQL</sequence>
<keyword id="KW-0012">Acyltransferase</keyword>
<keyword id="KW-0028">Amino-acid biosynthesis</keyword>
<keyword id="KW-0220">Diaminopimelate biosynthesis</keyword>
<keyword id="KW-0457">Lysine biosynthesis</keyword>
<keyword id="KW-0677">Repeat</keyword>
<keyword id="KW-0808">Transferase</keyword>
<comment type="function">
    <text evidence="1">Catalyzes the transfer of an acetyl group from acetyl-CoA to tetrahydrodipicolinate.</text>
</comment>
<comment type="catalytic activity">
    <reaction evidence="1">
        <text>(S)-2,3,4,5-tetrahydrodipicolinate + acetyl-CoA + H2O = L-2-acetamido-6-oxoheptanedioate + CoA</text>
        <dbReference type="Rhea" id="RHEA:13085"/>
        <dbReference type="ChEBI" id="CHEBI:15377"/>
        <dbReference type="ChEBI" id="CHEBI:16845"/>
        <dbReference type="ChEBI" id="CHEBI:57287"/>
        <dbReference type="ChEBI" id="CHEBI:57288"/>
        <dbReference type="ChEBI" id="CHEBI:58117"/>
        <dbReference type="EC" id="2.3.1.89"/>
    </reaction>
</comment>
<comment type="pathway">
    <text evidence="1">Amino-acid biosynthesis; L-lysine biosynthesis via DAP pathway; LL-2,6-diaminopimelate from (S)-tetrahydrodipicolinate (acetylase route): step 1/3.</text>
</comment>
<comment type="similarity">
    <text evidence="1">Belongs to the transferase hexapeptide repeat family. DapH subfamily.</text>
</comment>
<organism>
    <name type="scientific">Listeria welshimeri serovar 6b (strain ATCC 35897 / DSM 20650 / CCUG 15529 / CIP 8149 / NCTC 11857 / SLCC 5334 / V8)</name>
    <dbReference type="NCBI Taxonomy" id="386043"/>
    <lineage>
        <taxon>Bacteria</taxon>
        <taxon>Bacillati</taxon>
        <taxon>Bacillota</taxon>
        <taxon>Bacilli</taxon>
        <taxon>Bacillales</taxon>
        <taxon>Listeriaceae</taxon>
        <taxon>Listeria</taxon>
    </lineage>
</organism>
<feature type="chain" id="PRO_0000376681" description="2,3,4,5-tetrahydropyridine-2,6-dicarboxylate N-acetyltransferase">
    <location>
        <begin position="1"/>
        <end position="236"/>
    </location>
</feature>
<gene>
    <name evidence="1" type="primary">dapH</name>
    <name type="ordered locus">lwe0995</name>
</gene>
<reference key="1">
    <citation type="journal article" date="2006" name="J. Bacteriol.">
        <title>Whole-genome sequence of Listeria welshimeri reveals common steps in genome reduction with Listeria innocua as compared to Listeria monocytogenes.</title>
        <authorList>
            <person name="Hain T."/>
            <person name="Steinweg C."/>
            <person name="Kuenne C.T."/>
            <person name="Billion A."/>
            <person name="Ghai R."/>
            <person name="Chatterjee S.S."/>
            <person name="Domann E."/>
            <person name="Kaerst U."/>
            <person name="Goesmann A."/>
            <person name="Bekel T."/>
            <person name="Bartels D."/>
            <person name="Kaiser O."/>
            <person name="Meyer F."/>
            <person name="Puehler A."/>
            <person name="Weisshaar B."/>
            <person name="Wehland J."/>
            <person name="Liang C."/>
            <person name="Dandekar T."/>
            <person name="Lampidis R."/>
            <person name="Kreft J."/>
            <person name="Goebel W."/>
            <person name="Chakraborty T."/>
        </authorList>
    </citation>
    <scope>NUCLEOTIDE SEQUENCE [LARGE SCALE GENOMIC DNA]</scope>
    <source>
        <strain>ATCC 35897 / DSM 20650 / CCUG 15529 / CIP 8149 / NCTC 11857 / SLCC 5334 / V8</strain>
    </source>
</reference>
<dbReference type="EC" id="2.3.1.89" evidence="1"/>
<dbReference type="EMBL" id="AM263198">
    <property type="protein sequence ID" value="CAK20413.1"/>
    <property type="molecule type" value="Genomic_DNA"/>
</dbReference>
<dbReference type="SMR" id="A0AHD1"/>
<dbReference type="STRING" id="386043.lwe0995"/>
<dbReference type="KEGG" id="lwe:lwe0995"/>
<dbReference type="eggNOG" id="COG2171">
    <property type="taxonomic scope" value="Bacteria"/>
</dbReference>
<dbReference type="HOGENOM" id="CLU_103751_0_0_9"/>
<dbReference type="OrthoDB" id="9788080at2"/>
<dbReference type="UniPathway" id="UPA00034">
    <property type="reaction ID" value="UER00022"/>
</dbReference>
<dbReference type="Proteomes" id="UP000000779">
    <property type="component" value="Chromosome"/>
</dbReference>
<dbReference type="GO" id="GO:0047200">
    <property type="term" value="F:tetrahydrodipicolinate N-acetyltransferase activity"/>
    <property type="evidence" value="ECO:0007669"/>
    <property type="project" value="UniProtKB-EC"/>
</dbReference>
<dbReference type="GO" id="GO:0019877">
    <property type="term" value="P:diaminopimelate biosynthetic process"/>
    <property type="evidence" value="ECO:0007669"/>
    <property type="project" value="UniProtKB-UniRule"/>
</dbReference>
<dbReference type="GO" id="GO:0009089">
    <property type="term" value="P:lysine biosynthetic process via diaminopimelate"/>
    <property type="evidence" value="ECO:0007669"/>
    <property type="project" value="UniProtKB-UniRule"/>
</dbReference>
<dbReference type="Gene3D" id="2.160.10.10">
    <property type="entry name" value="Hexapeptide repeat proteins"/>
    <property type="match status" value="1"/>
</dbReference>
<dbReference type="Gene3D" id="3.30.70.250">
    <property type="entry name" value="Malonyl-CoA ACP transacylase, ACP-binding"/>
    <property type="match status" value="1"/>
</dbReference>
<dbReference type="HAMAP" id="MF_01691">
    <property type="entry name" value="DapH"/>
    <property type="match status" value="1"/>
</dbReference>
<dbReference type="InterPro" id="IPR019873">
    <property type="entry name" value="DapH"/>
</dbReference>
<dbReference type="InterPro" id="IPR013710">
    <property type="entry name" value="DapH_N"/>
</dbReference>
<dbReference type="InterPro" id="IPR001451">
    <property type="entry name" value="Hexapep"/>
</dbReference>
<dbReference type="InterPro" id="IPR018357">
    <property type="entry name" value="Hexapep_transf_CS"/>
</dbReference>
<dbReference type="InterPro" id="IPR050179">
    <property type="entry name" value="Trans_hexapeptide_repeat"/>
</dbReference>
<dbReference type="InterPro" id="IPR011004">
    <property type="entry name" value="Trimer_LpxA-like_sf"/>
</dbReference>
<dbReference type="NCBIfam" id="TIGR03532">
    <property type="entry name" value="DapD_Ac"/>
    <property type="match status" value="1"/>
</dbReference>
<dbReference type="PANTHER" id="PTHR43300:SF10">
    <property type="entry name" value="2,3,4,5-TETRAHYDROPYRIDINE-2,6-DICARBOXYLATE N-ACETYLTRANSFERASE"/>
    <property type="match status" value="1"/>
</dbReference>
<dbReference type="PANTHER" id="PTHR43300">
    <property type="entry name" value="ACETYLTRANSFERASE"/>
    <property type="match status" value="1"/>
</dbReference>
<dbReference type="Pfam" id="PF08503">
    <property type="entry name" value="DapH_N"/>
    <property type="match status" value="1"/>
</dbReference>
<dbReference type="Pfam" id="PF00132">
    <property type="entry name" value="Hexapep"/>
    <property type="match status" value="1"/>
</dbReference>
<dbReference type="Pfam" id="PF14602">
    <property type="entry name" value="Hexapep_2"/>
    <property type="match status" value="1"/>
</dbReference>
<dbReference type="SUPFAM" id="SSF51161">
    <property type="entry name" value="Trimeric LpxA-like enzymes"/>
    <property type="match status" value="1"/>
</dbReference>
<dbReference type="PROSITE" id="PS00101">
    <property type="entry name" value="HEXAPEP_TRANSFERASES"/>
    <property type="match status" value="1"/>
</dbReference>
<name>DAPH_LISW6</name>
<evidence type="ECO:0000255" key="1">
    <source>
        <dbReference type="HAMAP-Rule" id="MF_01691"/>
    </source>
</evidence>
<proteinExistence type="inferred from homology"/>
<protein>
    <recommendedName>
        <fullName evidence="1">2,3,4,5-tetrahydropyridine-2,6-dicarboxylate N-acetyltransferase</fullName>
        <ecNumber evidence="1">2.3.1.89</ecNumber>
    </recommendedName>
    <alternativeName>
        <fullName evidence="1">Tetrahydrodipicolinate N-acetyltransferase</fullName>
        <shortName evidence="1">THP acetyltransferase</shortName>
        <shortName evidence="1">Tetrahydropicolinate acetylase</shortName>
    </alternativeName>
</protein>
<accession>A0AHD1</accession>